<keyword id="KW-0067">ATP-binding</keyword>
<keyword id="KW-0963">Cytoplasm</keyword>
<keyword id="KW-0418">Kinase</keyword>
<keyword id="KW-0520">NAD</keyword>
<keyword id="KW-0521">NADP</keyword>
<keyword id="KW-0547">Nucleotide-binding</keyword>
<keyword id="KW-1185">Reference proteome</keyword>
<keyword id="KW-0808">Transferase</keyword>
<proteinExistence type="inferred from homology"/>
<name>NADK_CERS4</name>
<organism>
    <name type="scientific">Cereibacter sphaeroides (strain ATCC 17023 / DSM 158 / JCM 6121 / CCUG 31486 / LMG 2827 / NBRC 12203 / NCIMB 8253 / ATH 2.4.1.)</name>
    <name type="common">Rhodobacter sphaeroides</name>
    <dbReference type="NCBI Taxonomy" id="272943"/>
    <lineage>
        <taxon>Bacteria</taxon>
        <taxon>Pseudomonadati</taxon>
        <taxon>Pseudomonadota</taxon>
        <taxon>Alphaproteobacteria</taxon>
        <taxon>Rhodobacterales</taxon>
        <taxon>Paracoccaceae</taxon>
        <taxon>Cereibacter</taxon>
    </lineage>
</organism>
<reference key="1">
    <citation type="submission" date="2005-09" db="EMBL/GenBank/DDBJ databases">
        <title>Complete sequence of chromosome 1 of Rhodobacter sphaeroides 2.4.1.</title>
        <authorList>
            <person name="Copeland A."/>
            <person name="Lucas S."/>
            <person name="Lapidus A."/>
            <person name="Barry K."/>
            <person name="Detter J.C."/>
            <person name="Glavina T."/>
            <person name="Hammon N."/>
            <person name="Israni S."/>
            <person name="Pitluck S."/>
            <person name="Richardson P."/>
            <person name="Mackenzie C."/>
            <person name="Choudhary M."/>
            <person name="Larimer F."/>
            <person name="Hauser L.J."/>
            <person name="Land M."/>
            <person name="Donohue T.J."/>
            <person name="Kaplan S."/>
        </authorList>
    </citation>
    <scope>NUCLEOTIDE SEQUENCE [LARGE SCALE GENOMIC DNA]</scope>
    <source>
        <strain>ATCC 17023 / DSM 158 / JCM 6121 / CCUG 31486 / LMG 2827 / NBRC 12203 / NCIMB 8253 / ATH 2.4.1.</strain>
    </source>
</reference>
<gene>
    <name evidence="1" type="primary">nadK</name>
    <name type="ordered locus">RHOS4_24350</name>
    <name type="ordered locus">RSP_0825</name>
</gene>
<sequence>MTPQRIGFVASNAPVAQEALNVMAARYGQCPLPEADAIVALGGDGFMLQTLHETQSLDIPVYGMNRGTVGFLMNGYAEDGLRERLAEAEEEILNPLAMTAVTGAGEVFHRIAINEVSLLRAGPQAAWLKISVDGKVRMEELVCDGALVCTPAGSTAYNYSAHGPILPIGADVLALTAIAPFRPRRWRGALLPKTALVRFDVIDAQKRPVMADADGRSVRDVVSVEIRTEPAVRHRLLFDPGHGLEERLIREQFV</sequence>
<dbReference type="EC" id="2.7.1.23" evidence="1"/>
<dbReference type="EMBL" id="CP000143">
    <property type="protein sequence ID" value="ABA80003.1"/>
    <property type="molecule type" value="Genomic_DNA"/>
</dbReference>
<dbReference type="RefSeq" id="WP_011338520.1">
    <property type="nucleotide sequence ID" value="NC_007493.2"/>
</dbReference>
<dbReference type="RefSeq" id="YP_353904.1">
    <property type="nucleotide sequence ID" value="NC_007493.2"/>
</dbReference>
<dbReference type="SMR" id="Q3IZN1"/>
<dbReference type="STRING" id="272943.RSP_0825"/>
<dbReference type="EnsemblBacteria" id="ABA80003">
    <property type="protein sequence ID" value="ABA80003"/>
    <property type="gene ID" value="RSP_0825"/>
</dbReference>
<dbReference type="GeneID" id="3718403"/>
<dbReference type="KEGG" id="rsp:RSP_0825"/>
<dbReference type="PATRIC" id="fig|272943.9.peg.2786"/>
<dbReference type="eggNOG" id="COG0061">
    <property type="taxonomic scope" value="Bacteria"/>
</dbReference>
<dbReference type="OrthoDB" id="9774737at2"/>
<dbReference type="PhylomeDB" id="Q3IZN1"/>
<dbReference type="Proteomes" id="UP000002703">
    <property type="component" value="Chromosome 1"/>
</dbReference>
<dbReference type="GO" id="GO:0005737">
    <property type="term" value="C:cytoplasm"/>
    <property type="evidence" value="ECO:0007669"/>
    <property type="project" value="UniProtKB-SubCell"/>
</dbReference>
<dbReference type="GO" id="GO:0005524">
    <property type="term" value="F:ATP binding"/>
    <property type="evidence" value="ECO:0007669"/>
    <property type="project" value="UniProtKB-KW"/>
</dbReference>
<dbReference type="GO" id="GO:0046872">
    <property type="term" value="F:metal ion binding"/>
    <property type="evidence" value="ECO:0007669"/>
    <property type="project" value="UniProtKB-UniRule"/>
</dbReference>
<dbReference type="GO" id="GO:0051287">
    <property type="term" value="F:NAD binding"/>
    <property type="evidence" value="ECO:0007669"/>
    <property type="project" value="UniProtKB-ARBA"/>
</dbReference>
<dbReference type="GO" id="GO:0003951">
    <property type="term" value="F:NAD+ kinase activity"/>
    <property type="evidence" value="ECO:0007669"/>
    <property type="project" value="UniProtKB-UniRule"/>
</dbReference>
<dbReference type="GO" id="GO:0019674">
    <property type="term" value="P:NAD metabolic process"/>
    <property type="evidence" value="ECO:0007669"/>
    <property type="project" value="InterPro"/>
</dbReference>
<dbReference type="GO" id="GO:0006741">
    <property type="term" value="P:NADP biosynthetic process"/>
    <property type="evidence" value="ECO:0007669"/>
    <property type="project" value="UniProtKB-UniRule"/>
</dbReference>
<dbReference type="Gene3D" id="3.40.50.10330">
    <property type="entry name" value="Probable inorganic polyphosphate/atp-NAD kinase, domain 1"/>
    <property type="match status" value="1"/>
</dbReference>
<dbReference type="Gene3D" id="2.60.200.30">
    <property type="entry name" value="Probable inorganic polyphosphate/atp-NAD kinase, domain 2"/>
    <property type="match status" value="1"/>
</dbReference>
<dbReference type="HAMAP" id="MF_00361">
    <property type="entry name" value="NAD_kinase"/>
    <property type="match status" value="1"/>
</dbReference>
<dbReference type="InterPro" id="IPR017438">
    <property type="entry name" value="ATP-NAD_kinase_N"/>
</dbReference>
<dbReference type="InterPro" id="IPR017437">
    <property type="entry name" value="ATP-NAD_kinase_PpnK-typ_C"/>
</dbReference>
<dbReference type="InterPro" id="IPR016064">
    <property type="entry name" value="NAD/diacylglycerol_kinase_sf"/>
</dbReference>
<dbReference type="InterPro" id="IPR002504">
    <property type="entry name" value="NADK"/>
</dbReference>
<dbReference type="NCBIfam" id="NF003406">
    <property type="entry name" value="PRK04761.1"/>
    <property type="match status" value="1"/>
</dbReference>
<dbReference type="PANTHER" id="PTHR20275">
    <property type="entry name" value="NAD KINASE"/>
    <property type="match status" value="1"/>
</dbReference>
<dbReference type="PANTHER" id="PTHR20275:SF0">
    <property type="entry name" value="NAD KINASE"/>
    <property type="match status" value="1"/>
</dbReference>
<dbReference type="Pfam" id="PF01513">
    <property type="entry name" value="NAD_kinase"/>
    <property type="match status" value="1"/>
</dbReference>
<dbReference type="Pfam" id="PF20143">
    <property type="entry name" value="NAD_kinase_C"/>
    <property type="match status" value="1"/>
</dbReference>
<dbReference type="SUPFAM" id="SSF111331">
    <property type="entry name" value="NAD kinase/diacylglycerol kinase-like"/>
    <property type="match status" value="1"/>
</dbReference>
<evidence type="ECO:0000255" key="1">
    <source>
        <dbReference type="HAMAP-Rule" id="MF_00361"/>
    </source>
</evidence>
<comment type="function">
    <text evidence="1">Involved in the regulation of the intracellular balance of NAD and NADP, and is a key enzyme in the biosynthesis of NADP. Catalyzes specifically the phosphorylation on 2'-hydroxyl of the adenosine moiety of NAD to yield NADP.</text>
</comment>
<comment type="catalytic activity">
    <reaction evidence="1">
        <text>NAD(+) + ATP = ADP + NADP(+) + H(+)</text>
        <dbReference type="Rhea" id="RHEA:18629"/>
        <dbReference type="ChEBI" id="CHEBI:15378"/>
        <dbReference type="ChEBI" id="CHEBI:30616"/>
        <dbReference type="ChEBI" id="CHEBI:57540"/>
        <dbReference type="ChEBI" id="CHEBI:58349"/>
        <dbReference type="ChEBI" id="CHEBI:456216"/>
        <dbReference type="EC" id="2.7.1.23"/>
    </reaction>
</comment>
<comment type="cofactor">
    <cofactor evidence="1">
        <name>a divalent metal cation</name>
        <dbReference type="ChEBI" id="CHEBI:60240"/>
    </cofactor>
</comment>
<comment type="subcellular location">
    <subcellularLocation>
        <location evidence="1">Cytoplasm</location>
    </subcellularLocation>
</comment>
<comment type="similarity">
    <text evidence="1">Belongs to the NAD kinase family.</text>
</comment>
<protein>
    <recommendedName>
        <fullName evidence="1">NAD kinase</fullName>
        <ecNumber evidence="1">2.7.1.23</ecNumber>
    </recommendedName>
    <alternativeName>
        <fullName evidence="1">ATP-dependent NAD kinase</fullName>
    </alternativeName>
</protein>
<accession>Q3IZN1</accession>
<feature type="chain" id="PRO_1000005435" description="NAD kinase">
    <location>
        <begin position="1"/>
        <end position="254"/>
    </location>
</feature>
<feature type="active site" description="Proton acceptor" evidence="1">
    <location>
        <position position="44"/>
    </location>
</feature>
<feature type="binding site" evidence="1">
    <location>
        <begin position="44"/>
        <end position="45"/>
    </location>
    <ligand>
        <name>NAD(+)</name>
        <dbReference type="ChEBI" id="CHEBI:57540"/>
    </ligand>
</feature>
<feature type="binding site" evidence="1">
    <location>
        <begin position="114"/>
        <end position="115"/>
    </location>
    <ligand>
        <name>NAD(+)</name>
        <dbReference type="ChEBI" id="CHEBI:57540"/>
    </ligand>
</feature>
<feature type="binding site" evidence="1">
    <location>
        <position position="144"/>
    </location>
    <ligand>
        <name>NAD(+)</name>
        <dbReference type="ChEBI" id="CHEBI:57540"/>
    </ligand>
</feature>
<feature type="binding site" evidence="1">
    <location>
        <position position="152"/>
    </location>
    <ligand>
        <name>NAD(+)</name>
        <dbReference type="ChEBI" id="CHEBI:57540"/>
    </ligand>
</feature>
<feature type="binding site" evidence="1">
    <location>
        <begin position="155"/>
        <end position="160"/>
    </location>
    <ligand>
        <name>NAD(+)</name>
        <dbReference type="ChEBI" id="CHEBI:57540"/>
    </ligand>
</feature>
<feature type="binding site" evidence="1">
    <location>
        <position position="179"/>
    </location>
    <ligand>
        <name>NAD(+)</name>
        <dbReference type="ChEBI" id="CHEBI:57540"/>
    </ligand>
</feature>